<sequence length="428" mass="46203">MRVVILGSGVVGVASAYYLARAGHEVTVIDREAGPALDTSFANAGQISPGYAAPWAAPGVPLKAVKWMFEKHAPLAIRLDGTRFQLQWMWQMLRNCTTERYALNKGRMVRLAEYSRDCLQALRAETAIQYEGRTGGTLQVFRTQQQLDGAAKDIAVLREANVPFELLSSDELKKAEPALAAVSHKLTGGLRLPGDETGDCQLFTTRLAALAEQLGVKFRFNTRIDALAVAGGKIAGVQCGGEMVRADAYVVALGSYSTNLVASLVKIPVYPLKGYSITAPIVDAAKAPVSTVLDETYKIAITRFDDRIRVGGMAEIVGFDKRLRDARRGTLEMCVNDLFPGGGDTAKATFWTGLRPMTPDGTPIVGRTPVPNLFLNTGHGTLGWTMSCGSGQLLADLMSGKKPVIRADDLSVHRYLSETDGEHRPAYA</sequence>
<reference key="1">
    <citation type="journal article" date="2010" name="Genome Biol. Evol.">
        <title>Continuing evolution of Burkholderia mallei through genome reduction and large-scale rearrangements.</title>
        <authorList>
            <person name="Losada L."/>
            <person name="Ronning C.M."/>
            <person name="DeShazer D."/>
            <person name="Woods D."/>
            <person name="Fedorova N."/>
            <person name="Kim H.S."/>
            <person name="Shabalina S.A."/>
            <person name="Pearson T.R."/>
            <person name="Brinkac L."/>
            <person name="Tan P."/>
            <person name="Nandi T."/>
            <person name="Crabtree J."/>
            <person name="Badger J."/>
            <person name="Beckstrom-Sternberg S."/>
            <person name="Saqib M."/>
            <person name="Schutzer S.E."/>
            <person name="Keim P."/>
            <person name="Nierman W.C."/>
        </authorList>
    </citation>
    <scope>NUCLEOTIDE SEQUENCE [LARGE SCALE GENOMIC DNA]</scope>
    <source>
        <strain>1106a</strain>
    </source>
</reference>
<protein>
    <recommendedName>
        <fullName evidence="1">D-amino acid dehydrogenase</fullName>
        <ecNumber evidence="1">1.4.99.-</ecNumber>
    </recommendedName>
</protein>
<evidence type="ECO:0000255" key="1">
    <source>
        <dbReference type="HAMAP-Rule" id="MF_01202"/>
    </source>
</evidence>
<comment type="function">
    <text evidence="1">Oxidative deamination of D-amino acids.</text>
</comment>
<comment type="catalytic activity">
    <reaction evidence="1">
        <text>a D-alpha-amino acid + A + H2O = a 2-oxocarboxylate + AH2 + NH4(+)</text>
        <dbReference type="Rhea" id="RHEA:18125"/>
        <dbReference type="ChEBI" id="CHEBI:13193"/>
        <dbReference type="ChEBI" id="CHEBI:15377"/>
        <dbReference type="ChEBI" id="CHEBI:17499"/>
        <dbReference type="ChEBI" id="CHEBI:28938"/>
        <dbReference type="ChEBI" id="CHEBI:35179"/>
        <dbReference type="ChEBI" id="CHEBI:59871"/>
    </reaction>
</comment>
<comment type="cofactor">
    <cofactor evidence="1">
        <name>FAD</name>
        <dbReference type="ChEBI" id="CHEBI:57692"/>
    </cofactor>
</comment>
<comment type="pathway">
    <text>Amino-acid degradation; D-alanine degradation; NH(3) and pyruvate from D-alanine: step 1/1.</text>
</comment>
<comment type="similarity">
    <text evidence="1">Belongs to the DadA oxidoreductase family.</text>
</comment>
<proteinExistence type="inferred from homology"/>
<name>DADA_BURP0</name>
<gene>
    <name evidence="1" type="primary">dadA</name>
    <name type="ordered locus">BURPS1106A_2925</name>
</gene>
<dbReference type="EC" id="1.4.99.-" evidence="1"/>
<dbReference type="EMBL" id="CP000572">
    <property type="protein sequence ID" value="ABN91492.1"/>
    <property type="molecule type" value="Genomic_DNA"/>
</dbReference>
<dbReference type="RefSeq" id="WP_004527500.1">
    <property type="nucleotide sequence ID" value="NC_009076.1"/>
</dbReference>
<dbReference type="SMR" id="A3NXU9"/>
<dbReference type="KEGG" id="bpl:BURPS1106A_2925"/>
<dbReference type="HOGENOM" id="CLU_007884_9_2_4"/>
<dbReference type="UniPathway" id="UPA00043">
    <property type="reaction ID" value="UER00498"/>
</dbReference>
<dbReference type="Proteomes" id="UP000006738">
    <property type="component" value="Chromosome I"/>
</dbReference>
<dbReference type="GO" id="GO:0005737">
    <property type="term" value="C:cytoplasm"/>
    <property type="evidence" value="ECO:0007669"/>
    <property type="project" value="TreeGrafter"/>
</dbReference>
<dbReference type="GO" id="GO:0005886">
    <property type="term" value="C:plasma membrane"/>
    <property type="evidence" value="ECO:0007669"/>
    <property type="project" value="TreeGrafter"/>
</dbReference>
<dbReference type="GO" id="GO:0008718">
    <property type="term" value="F:D-amino-acid dehydrogenase activity"/>
    <property type="evidence" value="ECO:0007669"/>
    <property type="project" value="UniProtKB-UniRule"/>
</dbReference>
<dbReference type="GO" id="GO:0055130">
    <property type="term" value="P:D-alanine catabolic process"/>
    <property type="evidence" value="ECO:0007669"/>
    <property type="project" value="UniProtKB-UniPathway"/>
</dbReference>
<dbReference type="FunFam" id="3.50.50.60:FF:000020">
    <property type="entry name" value="D-amino acid dehydrogenase"/>
    <property type="match status" value="1"/>
</dbReference>
<dbReference type="Gene3D" id="3.30.9.10">
    <property type="entry name" value="D-Amino Acid Oxidase, subunit A, domain 2"/>
    <property type="match status" value="1"/>
</dbReference>
<dbReference type="Gene3D" id="3.50.50.60">
    <property type="entry name" value="FAD/NAD(P)-binding domain"/>
    <property type="match status" value="2"/>
</dbReference>
<dbReference type="HAMAP" id="MF_01202">
    <property type="entry name" value="DadA"/>
    <property type="match status" value="1"/>
</dbReference>
<dbReference type="InterPro" id="IPR023080">
    <property type="entry name" value="DadA"/>
</dbReference>
<dbReference type="InterPro" id="IPR006076">
    <property type="entry name" value="FAD-dep_OxRdtase"/>
</dbReference>
<dbReference type="InterPro" id="IPR036188">
    <property type="entry name" value="FAD/NAD-bd_sf"/>
</dbReference>
<dbReference type="NCBIfam" id="NF001933">
    <property type="entry name" value="PRK00711.1"/>
    <property type="match status" value="1"/>
</dbReference>
<dbReference type="PANTHER" id="PTHR13847:SF280">
    <property type="entry name" value="D-AMINO ACID DEHYDROGENASE"/>
    <property type="match status" value="1"/>
</dbReference>
<dbReference type="PANTHER" id="PTHR13847">
    <property type="entry name" value="SARCOSINE DEHYDROGENASE-RELATED"/>
    <property type="match status" value="1"/>
</dbReference>
<dbReference type="Pfam" id="PF01266">
    <property type="entry name" value="DAO"/>
    <property type="match status" value="1"/>
</dbReference>
<dbReference type="SUPFAM" id="SSF54373">
    <property type="entry name" value="FAD-linked reductases, C-terminal domain"/>
    <property type="match status" value="1"/>
</dbReference>
<dbReference type="SUPFAM" id="SSF51905">
    <property type="entry name" value="FAD/NAD(P)-binding domain"/>
    <property type="match status" value="1"/>
</dbReference>
<keyword id="KW-0274">FAD</keyword>
<keyword id="KW-0285">Flavoprotein</keyword>
<keyword id="KW-0560">Oxidoreductase</keyword>
<accession>A3NXU9</accession>
<feature type="chain" id="PRO_1000066079" description="D-amino acid dehydrogenase">
    <location>
        <begin position="1"/>
        <end position="428"/>
    </location>
</feature>
<feature type="binding site" evidence="1">
    <location>
        <begin position="3"/>
        <end position="17"/>
    </location>
    <ligand>
        <name>FAD</name>
        <dbReference type="ChEBI" id="CHEBI:57692"/>
    </ligand>
</feature>
<organism>
    <name type="scientific">Burkholderia pseudomallei (strain 1106a)</name>
    <dbReference type="NCBI Taxonomy" id="357348"/>
    <lineage>
        <taxon>Bacteria</taxon>
        <taxon>Pseudomonadati</taxon>
        <taxon>Pseudomonadota</taxon>
        <taxon>Betaproteobacteria</taxon>
        <taxon>Burkholderiales</taxon>
        <taxon>Burkholderiaceae</taxon>
        <taxon>Burkholderia</taxon>
        <taxon>pseudomallei group</taxon>
    </lineage>
</organism>